<gene>
    <name type="primary">EGD1</name>
    <name type="ORF">UMAG_03074</name>
</gene>
<sequence>MVLNQEKLAKLQAASRTGGKGTPRRKMAPKPKGPGGEDPKLQAALKKLQVEPVSGVEEVNMFKEDGNVLHFAAPKVHGLPTSNTFAVYGNGVDKELTELVPGILNQLGPDSLASLRKLAESYQAMNAQHAASQAAAAGTKDDDDVPDVVENFDEADKKETEVDKLD</sequence>
<comment type="function">
    <text evidence="1">Component of the nascent polypeptide-associated complex (NAC), a dynamic component of the ribosomal exit tunnel, protecting the emerging polypeptides from interaction with other cytoplasmic proteins to ensure appropriate nascent protein targeting. The NAC complex also promotes mitochondrial protein import by enhancing productive ribosome interactions with the outer mitochondrial membrane and blocks the inappropriate interaction of ribosomes translating non-secretory nascent polypeptides with translocation sites in the membrane of the endoplasmic reticulum. EGD1 may act as a transcription factor that exert a negative effect on the expression of several genes that are transcribed by RNA polymerase II.</text>
</comment>
<comment type="subunit">
    <text evidence="1">Part of the nascent polypeptide-associated complex (NAC), consisting of EGD2 and EGD1. NAC associates with ribosomes via EGD1 (By similarity).</text>
</comment>
<comment type="subcellular location">
    <subcellularLocation>
        <location evidence="1">Cytoplasm</location>
    </subcellularLocation>
    <subcellularLocation>
        <location evidence="1">Nucleus</location>
    </subcellularLocation>
    <text evidence="1">Predominantly cytoplasmic, may also transiently localize to the nucleus.</text>
</comment>
<comment type="similarity">
    <text evidence="4">Belongs to the NAC-beta family.</text>
</comment>
<accession>Q4P9Y9</accession>
<accession>A0A0D1DZT3</accession>
<organism>
    <name type="scientific">Mycosarcoma maydis</name>
    <name type="common">Corn smut fungus</name>
    <name type="synonym">Ustilago maydis</name>
    <dbReference type="NCBI Taxonomy" id="5270"/>
    <lineage>
        <taxon>Eukaryota</taxon>
        <taxon>Fungi</taxon>
        <taxon>Dikarya</taxon>
        <taxon>Basidiomycota</taxon>
        <taxon>Ustilaginomycotina</taxon>
        <taxon>Ustilaginomycetes</taxon>
        <taxon>Ustilaginales</taxon>
        <taxon>Ustilaginaceae</taxon>
        <taxon>Mycosarcoma</taxon>
    </lineage>
</organism>
<protein>
    <recommendedName>
        <fullName>Nascent polypeptide-associated complex subunit beta</fullName>
        <shortName>NAC-beta</shortName>
    </recommendedName>
    <alternativeName>
        <fullName>Beta-NAC</fullName>
    </alternativeName>
</protein>
<proteinExistence type="inferred from homology"/>
<reference key="1">
    <citation type="journal article" date="2006" name="Nature">
        <title>Insights from the genome of the biotrophic fungal plant pathogen Ustilago maydis.</title>
        <authorList>
            <person name="Kaemper J."/>
            <person name="Kahmann R."/>
            <person name="Boelker M."/>
            <person name="Ma L.-J."/>
            <person name="Brefort T."/>
            <person name="Saville B.J."/>
            <person name="Banuett F."/>
            <person name="Kronstad J.W."/>
            <person name="Gold S.E."/>
            <person name="Mueller O."/>
            <person name="Perlin M.H."/>
            <person name="Woesten H.A.B."/>
            <person name="de Vries R."/>
            <person name="Ruiz-Herrera J."/>
            <person name="Reynaga-Pena C.G."/>
            <person name="Snetselaar K."/>
            <person name="McCann M."/>
            <person name="Perez-Martin J."/>
            <person name="Feldbruegge M."/>
            <person name="Basse C.W."/>
            <person name="Steinberg G."/>
            <person name="Ibeas J.I."/>
            <person name="Holloman W."/>
            <person name="Guzman P."/>
            <person name="Farman M.L."/>
            <person name="Stajich J.E."/>
            <person name="Sentandreu R."/>
            <person name="Gonzalez-Prieto J.M."/>
            <person name="Kennell J.C."/>
            <person name="Molina L."/>
            <person name="Schirawski J."/>
            <person name="Mendoza-Mendoza A."/>
            <person name="Greilinger D."/>
            <person name="Muench K."/>
            <person name="Roessel N."/>
            <person name="Scherer M."/>
            <person name="Vranes M."/>
            <person name="Ladendorf O."/>
            <person name="Vincon V."/>
            <person name="Fuchs U."/>
            <person name="Sandrock B."/>
            <person name="Meng S."/>
            <person name="Ho E.C.H."/>
            <person name="Cahill M.J."/>
            <person name="Boyce K.J."/>
            <person name="Klose J."/>
            <person name="Klosterman S.J."/>
            <person name="Deelstra H.J."/>
            <person name="Ortiz-Castellanos L."/>
            <person name="Li W."/>
            <person name="Sanchez-Alonso P."/>
            <person name="Schreier P.H."/>
            <person name="Haeuser-Hahn I."/>
            <person name="Vaupel M."/>
            <person name="Koopmann E."/>
            <person name="Friedrich G."/>
            <person name="Voss H."/>
            <person name="Schlueter T."/>
            <person name="Margolis J."/>
            <person name="Platt D."/>
            <person name="Swimmer C."/>
            <person name="Gnirke A."/>
            <person name="Chen F."/>
            <person name="Vysotskaia V."/>
            <person name="Mannhaupt G."/>
            <person name="Gueldener U."/>
            <person name="Muensterkoetter M."/>
            <person name="Haase D."/>
            <person name="Oesterheld M."/>
            <person name="Mewes H.-W."/>
            <person name="Mauceli E.W."/>
            <person name="DeCaprio D."/>
            <person name="Wade C.M."/>
            <person name="Butler J."/>
            <person name="Young S.K."/>
            <person name="Jaffe D.B."/>
            <person name="Calvo S.E."/>
            <person name="Nusbaum C."/>
            <person name="Galagan J.E."/>
            <person name="Birren B.W."/>
        </authorList>
    </citation>
    <scope>NUCLEOTIDE SEQUENCE [LARGE SCALE GENOMIC DNA]</scope>
    <source>
        <strain>DSM 14603 / FGSC 9021 / UM521</strain>
    </source>
</reference>
<reference key="2">
    <citation type="submission" date="2014-09" db="EMBL/GenBank/DDBJ databases">
        <authorList>
            <person name="Gueldener U."/>
            <person name="Muensterkoetter M."/>
            <person name="Walter M.C."/>
            <person name="Mannhaupt G."/>
            <person name="Kahmann R."/>
        </authorList>
    </citation>
    <scope>GENOME REANNOTATION</scope>
    <source>
        <strain>DSM 14603 / FGSC 9021 / UM521</strain>
    </source>
</reference>
<name>NACB_MYCMD</name>
<keyword id="KW-0963">Cytoplasm</keyword>
<keyword id="KW-0539">Nucleus</keyword>
<keyword id="KW-0653">Protein transport</keyword>
<keyword id="KW-1185">Reference proteome</keyword>
<keyword id="KW-0678">Repressor</keyword>
<keyword id="KW-0804">Transcription</keyword>
<keyword id="KW-0805">Transcription regulation</keyword>
<keyword id="KW-0813">Transport</keyword>
<dbReference type="EMBL" id="CM003146">
    <property type="protein sequence ID" value="KIS69096.1"/>
    <property type="molecule type" value="Genomic_DNA"/>
</dbReference>
<dbReference type="RefSeq" id="XP_011389438.1">
    <property type="nucleotide sequence ID" value="XM_011391136.1"/>
</dbReference>
<dbReference type="SMR" id="Q4P9Y9"/>
<dbReference type="FunCoup" id="Q4P9Y9">
    <property type="interactions" value="611"/>
</dbReference>
<dbReference type="STRING" id="237631.Q4P9Y9"/>
<dbReference type="EnsemblFungi" id="KIS69096">
    <property type="protein sequence ID" value="KIS69096"/>
    <property type="gene ID" value="UMAG_03074"/>
</dbReference>
<dbReference type="GeneID" id="23563648"/>
<dbReference type="KEGG" id="uma:UMAG_03074"/>
<dbReference type="VEuPathDB" id="FungiDB:UMAG_03074"/>
<dbReference type="eggNOG" id="KOG2240">
    <property type="taxonomic scope" value="Eukaryota"/>
</dbReference>
<dbReference type="HOGENOM" id="CLU_098726_2_1_1"/>
<dbReference type="InParanoid" id="Q4P9Y9"/>
<dbReference type="OMA" id="AGDTYME"/>
<dbReference type="OrthoDB" id="8033832at2759"/>
<dbReference type="Proteomes" id="UP000000561">
    <property type="component" value="Chromosome 7"/>
</dbReference>
<dbReference type="GO" id="GO:0005829">
    <property type="term" value="C:cytosol"/>
    <property type="evidence" value="ECO:0000318"/>
    <property type="project" value="GO_Central"/>
</dbReference>
<dbReference type="GO" id="GO:0005854">
    <property type="term" value="C:nascent polypeptide-associated complex"/>
    <property type="evidence" value="ECO:0000318"/>
    <property type="project" value="GO_Central"/>
</dbReference>
<dbReference type="GO" id="GO:0005634">
    <property type="term" value="C:nucleus"/>
    <property type="evidence" value="ECO:0007669"/>
    <property type="project" value="UniProtKB-SubCell"/>
</dbReference>
<dbReference type="GO" id="GO:0015031">
    <property type="term" value="P:protein transport"/>
    <property type="evidence" value="ECO:0007669"/>
    <property type="project" value="UniProtKB-KW"/>
</dbReference>
<dbReference type="CDD" id="cd22055">
    <property type="entry name" value="NAC_BTF3"/>
    <property type="match status" value="1"/>
</dbReference>
<dbReference type="FunFam" id="2.20.70.30:FF:000003">
    <property type="entry name" value="Nascent polypeptide-associated complex subunit beta"/>
    <property type="match status" value="1"/>
</dbReference>
<dbReference type="Gene3D" id="2.20.70.30">
    <property type="entry name" value="Nascent polypeptide-associated complex domain"/>
    <property type="match status" value="1"/>
</dbReference>
<dbReference type="InterPro" id="IPR039370">
    <property type="entry name" value="BTF3"/>
</dbReference>
<dbReference type="InterPro" id="IPR038187">
    <property type="entry name" value="NAC_A/B_dom_sf"/>
</dbReference>
<dbReference type="InterPro" id="IPR002715">
    <property type="entry name" value="Nas_poly-pep-assoc_cplx_dom"/>
</dbReference>
<dbReference type="PANTHER" id="PTHR10351">
    <property type="entry name" value="TRANSCRIPTION FACTOR BTF3 FAMILY MEMBER"/>
    <property type="match status" value="1"/>
</dbReference>
<dbReference type="Pfam" id="PF01849">
    <property type="entry name" value="NAC"/>
    <property type="match status" value="1"/>
</dbReference>
<dbReference type="SMART" id="SM01407">
    <property type="entry name" value="NAC"/>
    <property type="match status" value="1"/>
</dbReference>
<dbReference type="PROSITE" id="PS51151">
    <property type="entry name" value="NAC_AB"/>
    <property type="match status" value="1"/>
</dbReference>
<evidence type="ECO:0000250" key="1"/>
<evidence type="ECO:0000255" key="2">
    <source>
        <dbReference type="PROSITE-ProRule" id="PRU00507"/>
    </source>
</evidence>
<evidence type="ECO:0000256" key="3">
    <source>
        <dbReference type="SAM" id="MobiDB-lite"/>
    </source>
</evidence>
<evidence type="ECO:0000305" key="4"/>
<feature type="chain" id="PRO_0000273515" description="Nascent polypeptide-associated complex subunit beta">
    <location>
        <begin position="1"/>
        <end position="166"/>
    </location>
</feature>
<feature type="domain" description="NAC-A/B" evidence="2">
    <location>
        <begin position="35"/>
        <end position="100"/>
    </location>
</feature>
<feature type="region of interest" description="Disordered" evidence="3">
    <location>
        <begin position="1"/>
        <end position="40"/>
    </location>
</feature>
<feature type="region of interest" description="Disordered" evidence="3">
    <location>
        <begin position="129"/>
        <end position="166"/>
    </location>
</feature>
<feature type="compositionally biased region" description="Acidic residues" evidence="3">
    <location>
        <begin position="141"/>
        <end position="153"/>
    </location>
</feature>
<feature type="compositionally biased region" description="Basic and acidic residues" evidence="3">
    <location>
        <begin position="154"/>
        <end position="166"/>
    </location>
</feature>